<accession>Q95711</accession>
<accession>Q34733</accession>
<geneLocation type="mitochondrion"/>
<keyword id="KW-0249">Electron transport</keyword>
<keyword id="KW-0349">Heme</keyword>
<keyword id="KW-0408">Iron</keyword>
<keyword id="KW-0472">Membrane</keyword>
<keyword id="KW-0479">Metal-binding</keyword>
<keyword id="KW-0496">Mitochondrion</keyword>
<keyword id="KW-0999">Mitochondrion inner membrane</keyword>
<keyword id="KW-0679">Respiratory chain</keyword>
<keyword id="KW-0812">Transmembrane</keyword>
<keyword id="KW-1133">Transmembrane helix</keyword>
<keyword id="KW-0813">Transport</keyword>
<keyword id="KW-0830">Ubiquinone</keyword>
<gene>
    <name type="primary">MT-CYB</name>
    <name type="synonym">COB</name>
    <name type="synonym">CYTB</name>
    <name type="synonym">MTCYB</name>
</gene>
<sequence length="380" mass="42620">MTPLRKTNPLMKLINHSLIDLPAPSNISMWWNFGSLLGACLILQIITGLFLAMHYTPDASTAFSSVAHITRDVNYGWIIRYLHANGASMFFICLFLHIGRGLYYGSFLYLETWNIGIILLLATMATAFMGYVLPWGQMSFWGATVITNLLSAVPYIGTDLVQWVWGGYSVDNATLTRFFTFHFILPFIITALAALHLLFLHETGSNNPLGISSQPDKIAFHPYYTIKDILGLFLLLLMLMSLVLFSPDLLGDPSNYTQANPLNTPPHIKPEWYFLFAYAILRSVPNKLGGVLALLLSILILAMIPALHTAKQQSMMFRPLSQLTYWLLVMNLLILTWIGGQPVSYPFITIGQVASALYFTTILVLMPAASLIENKMLKWT</sequence>
<comment type="function">
    <text evidence="2">Component of the ubiquinol-cytochrome c reductase complex (complex III or cytochrome b-c1 complex) that is part of the mitochondrial respiratory chain. The b-c1 complex mediates electron transfer from ubiquinol to cytochrome c. Contributes to the generation of a proton gradient across the mitochondrial membrane that is then used for ATP synthesis.</text>
</comment>
<comment type="cofactor">
    <cofactor evidence="2">
        <name>heme b</name>
        <dbReference type="ChEBI" id="CHEBI:60344"/>
    </cofactor>
    <text evidence="2">Binds 2 heme b groups non-covalently.</text>
</comment>
<comment type="subunit">
    <text evidence="2">The cytochrome bc1 complex contains 11 subunits: 3 respiratory subunits (MT-CYB, CYC1 and UQCRFS1), 2 core proteins (UQCRC1 and UQCRC2) and 6 low-molecular weight proteins (UQCRH/QCR6, UQCRB/QCR7, UQCRQ/QCR8, UQCR10/QCR9, UQCR11/QCR10 and a cleavage product of UQCRFS1). This cytochrome bc1 complex then forms a dimer.</text>
</comment>
<comment type="subcellular location">
    <subcellularLocation>
        <location evidence="2">Mitochondrion inner membrane</location>
        <topology evidence="2">Multi-pass membrane protein</topology>
    </subcellularLocation>
</comment>
<comment type="miscellaneous">
    <text evidence="1">Heme 1 (or BL or b562) is low-potential and absorbs at about 562 nm, and heme 2 (or BH or b566) is high-potential and absorbs at about 566 nm.</text>
</comment>
<comment type="similarity">
    <text evidence="3 4">Belongs to the cytochrome b family.</text>
</comment>
<comment type="caution">
    <text evidence="2">The full-length protein contains only eight transmembrane helices, not nine as predicted by bioinformatics tools.</text>
</comment>
<dbReference type="EMBL" id="X99256">
    <property type="protein sequence ID" value="CAA67640.1"/>
    <property type="molecule type" value="Genomic_DNA"/>
</dbReference>
<dbReference type="EMBL" id="L02772">
    <property type="protein sequence ID" value="AAA31789.1"/>
    <property type="molecule type" value="Genomic_DNA"/>
</dbReference>
<dbReference type="PIR" id="T11845">
    <property type="entry name" value="T11845"/>
</dbReference>
<dbReference type="RefSeq" id="NP_007834.1">
    <property type="nucleotide sequence ID" value="NC_002082.1"/>
</dbReference>
<dbReference type="SMR" id="Q95711"/>
<dbReference type="GeneID" id="808467"/>
<dbReference type="CTD" id="4519"/>
<dbReference type="GO" id="GO:0005743">
    <property type="term" value="C:mitochondrial inner membrane"/>
    <property type="evidence" value="ECO:0007669"/>
    <property type="project" value="UniProtKB-SubCell"/>
</dbReference>
<dbReference type="GO" id="GO:0045275">
    <property type="term" value="C:respiratory chain complex III"/>
    <property type="evidence" value="ECO:0007669"/>
    <property type="project" value="InterPro"/>
</dbReference>
<dbReference type="GO" id="GO:0046872">
    <property type="term" value="F:metal ion binding"/>
    <property type="evidence" value="ECO:0007669"/>
    <property type="project" value="UniProtKB-KW"/>
</dbReference>
<dbReference type="GO" id="GO:0008121">
    <property type="term" value="F:ubiquinol-cytochrome-c reductase activity"/>
    <property type="evidence" value="ECO:0007669"/>
    <property type="project" value="InterPro"/>
</dbReference>
<dbReference type="GO" id="GO:0006122">
    <property type="term" value="P:mitochondrial electron transport, ubiquinol to cytochrome c"/>
    <property type="evidence" value="ECO:0007669"/>
    <property type="project" value="TreeGrafter"/>
</dbReference>
<dbReference type="CDD" id="cd00290">
    <property type="entry name" value="cytochrome_b_C"/>
    <property type="match status" value="1"/>
</dbReference>
<dbReference type="CDD" id="cd00284">
    <property type="entry name" value="Cytochrome_b_N"/>
    <property type="match status" value="1"/>
</dbReference>
<dbReference type="FunFam" id="1.20.810.10:FF:000002">
    <property type="entry name" value="Cytochrome b"/>
    <property type="match status" value="1"/>
</dbReference>
<dbReference type="Gene3D" id="1.20.810.10">
    <property type="entry name" value="Cytochrome Bc1 Complex, Chain C"/>
    <property type="match status" value="1"/>
</dbReference>
<dbReference type="InterPro" id="IPR005798">
    <property type="entry name" value="Cyt_b/b6_C"/>
</dbReference>
<dbReference type="InterPro" id="IPR036150">
    <property type="entry name" value="Cyt_b/b6_C_sf"/>
</dbReference>
<dbReference type="InterPro" id="IPR005797">
    <property type="entry name" value="Cyt_b/b6_N"/>
</dbReference>
<dbReference type="InterPro" id="IPR027387">
    <property type="entry name" value="Cytb/b6-like_sf"/>
</dbReference>
<dbReference type="InterPro" id="IPR030689">
    <property type="entry name" value="Cytochrome_b"/>
</dbReference>
<dbReference type="InterPro" id="IPR048260">
    <property type="entry name" value="Cytochrome_b_C_euk/bac"/>
</dbReference>
<dbReference type="InterPro" id="IPR048259">
    <property type="entry name" value="Cytochrome_b_N_euk/bac"/>
</dbReference>
<dbReference type="InterPro" id="IPR016174">
    <property type="entry name" value="Di-haem_cyt_TM"/>
</dbReference>
<dbReference type="PANTHER" id="PTHR19271">
    <property type="entry name" value="CYTOCHROME B"/>
    <property type="match status" value="1"/>
</dbReference>
<dbReference type="PANTHER" id="PTHR19271:SF16">
    <property type="entry name" value="CYTOCHROME B"/>
    <property type="match status" value="1"/>
</dbReference>
<dbReference type="Pfam" id="PF00032">
    <property type="entry name" value="Cytochrom_B_C"/>
    <property type="match status" value="1"/>
</dbReference>
<dbReference type="Pfam" id="PF00033">
    <property type="entry name" value="Cytochrome_B"/>
    <property type="match status" value="1"/>
</dbReference>
<dbReference type="PIRSF" id="PIRSF038885">
    <property type="entry name" value="COB"/>
    <property type="match status" value="1"/>
</dbReference>
<dbReference type="SUPFAM" id="SSF81648">
    <property type="entry name" value="a domain/subunit of cytochrome bc1 complex (Ubiquinol-cytochrome c reductase)"/>
    <property type="match status" value="1"/>
</dbReference>
<dbReference type="SUPFAM" id="SSF81342">
    <property type="entry name" value="Transmembrane di-heme cytochromes"/>
    <property type="match status" value="1"/>
</dbReference>
<dbReference type="PROSITE" id="PS51003">
    <property type="entry name" value="CYTB_CTER"/>
    <property type="match status" value="1"/>
</dbReference>
<dbReference type="PROSITE" id="PS51002">
    <property type="entry name" value="CYTB_NTER"/>
    <property type="match status" value="1"/>
</dbReference>
<reference key="1">
    <citation type="journal article" date="1996" name="Hereditas">
        <title>A complete mitochondrial DNA molecule of the white-handed gibbon, Hylobates lar, and comparison among individual mitochondrial genes of all hominoid genera.</title>
        <authorList>
            <person name="Arnason U."/>
            <person name="Gullberg A."/>
            <person name="Xu X."/>
        </authorList>
    </citation>
    <scope>NUCLEOTIDE SEQUENCE [GENOMIC DNA]</scope>
    <source>
        <strain>Isolate Ester</strain>
    </source>
</reference>
<reference key="2">
    <citation type="journal article" date="1992" name="Mol. Phylogenet. Evol.">
        <title>A phylogenetic study of the gibbons (Hylobates) using DNA obtained noninvasively from hair.</title>
        <authorList>
            <person name="Garza J.C."/>
            <person name="Woodruff D.S."/>
        </authorList>
    </citation>
    <scope>NUCLEOTIDE SEQUENCE [GENOMIC DNA] OF 48-130</scope>
    <source>
        <tissue>Hair</tissue>
    </source>
</reference>
<protein>
    <recommendedName>
        <fullName>Cytochrome b</fullName>
    </recommendedName>
    <alternativeName>
        <fullName>Complex III subunit 3</fullName>
    </alternativeName>
    <alternativeName>
        <fullName>Complex III subunit III</fullName>
    </alternativeName>
    <alternativeName>
        <fullName>Cytochrome b-c1 complex subunit 3</fullName>
    </alternativeName>
    <alternativeName>
        <fullName>Ubiquinol-cytochrome-c reductase complex cytochrome b subunit</fullName>
    </alternativeName>
</protein>
<evidence type="ECO:0000250" key="1"/>
<evidence type="ECO:0000250" key="2">
    <source>
        <dbReference type="UniProtKB" id="P00157"/>
    </source>
</evidence>
<evidence type="ECO:0000255" key="3">
    <source>
        <dbReference type="PROSITE-ProRule" id="PRU00967"/>
    </source>
</evidence>
<evidence type="ECO:0000255" key="4">
    <source>
        <dbReference type="PROSITE-ProRule" id="PRU00968"/>
    </source>
</evidence>
<organism>
    <name type="scientific">Hylobates lar</name>
    <name type="common">Lar gibbon</name>
    <name type="synonym">White-handed gibbon</name>
    <dbReference type="NCBI Taxonomy" id="9580"/>
    <lineage>
        <taxon>Eukaryota</taxon>
        <taxon>Metazoa</taxon>
        <taxon>Chordata</taxon>
        <taxon>Craniata</taxon>
        <taxon>Vertebrata</taxon>
        <taxon>Euteleostomi</taxon>
        <taxon>Mammalia</taxon>
        <taxon>Eutheria</taxon>
        <taxon>Euarchontoglires</taxon>
        <taxon>Primates</taxon>
        <taxon>Haplorrhini</taxon>
        <taxon>Catarrhini</taxon>
        <taxon>Hylobatidae</taxon>
        <taxon>Hylobates</taxon>
    </lineage>
</organism>
<name>CYB_HYLLA</name>
<feature type="chain" id="PRO_0000061052" description="Cytochrome b">
    <location>
        <begin position="1"/>
        <end position="380"/>
    </location>
</feature>
<feature type="transmembrane region" description="Helical" evidence="2">
    <location>
        <begin position="33"/>
        <end position="53"/>
    </location>
</feature>
<feature type="transmembrane region" description="Helical" evidence="2">
    <location>
        <begin position="77"/>
        <end position="98"/>
    </location>
</feature>
<feature type="transmembrane region" description="Helical" evidence="2">
    <location>
        <begin position="113"/>
        <end position="133"/>
    </location>
</feature>
<feature type="transmembrane region" description="Helical" evidence="2">
    <location>
        <begin position="178"/>
        <end position="198"/>
    </location>
</feature>
<feature type="transmembrane region" description="Helical" evidence="2">
    <location>
        <begin position="226"/>
        <end position="246"/>
    </location>
</feature>
<feature type="transmembrane region" description="Helical" evidence="2">
    <location>
        <begin position="288"/>
        <end position="308"/>
    </location>
</feature>
<feature type="transmembrane region" description="Helical" evidence="2">
    <location>
        <begin position="320"/>
        <end position="340"/>
    </location>
</feature>
<feature type="transmembrane region" description="Helical" evidence="2">
    <location>
        <begin position="347"/>
        <end position="367"/>
    </location>
</feature>
<feature type="binding site" description="axial binding residue" evidence="2">
    <location>
        <position position="83"/>
    </location>
    <ligand>
        <name>heme b</name>
        <dbReference type="ChEBI" id="CHEBI:60344"/>
        <label>b562</label>
    </ligand>
    <ligandPart>
        <name>Fe</name>
        <dbReference type="ChEBI" id="CHEBI:18248"/>
    </ligandPart>
</feature>
<feature type="binding site" description="axial binding residue" evidence="2">
    <location>
        <position position="97"/>
    </location>
    <ligand>
        <name>heme b</name>
        <dbReference type="ChEBI" id="CHEBI:60344"/>
        <label>b566</label>
    </ligand>
    <ligandPart>
        <name>Fe</name>
        <dbReference type="ChEBI" id="CHEBI:18248"/>
    </ligandPart>
</feature>
<feature type="binding site" description="axial binding residue" evidence="2">
    <location>
        <position position="182"/>
    </location>
    <ligand>
        <name>heme b</name>
        <dbReference type="ChEBI" id="CHEBI:60344"/>
        <label>b562</label>
    </ligand>
    <ligandPart>
        <name>Fe</name>
        <dbReference type="ChEBI" id="CHEBI:18248"/>
    </ligandPart>
</feature>
<feature type="binding site" description="axial binding residue" evidence="2">
    <location>
        <position position="196"/>
    </location>
    <ligand>
        <name>heme b</name>
        <dbReference type="ChEBI" id="CHEBI:60344"/>
        <label>b566</label>
    </ligand>
    <ligandPart>
        <name>Fe</name>
        <dbReference type="ChEBI" id="CHEBI:18248"/>
    </ligandPart>
</feature>
<feature type="binding site" evidence="2">
    <location>
        <position position="201"/>
    </location>
    <ligand>
        <name>a ubiquinone</name>
        <dbReference type="ChEBI" id="CHEBI:16389"/>
    </ligand>
</feature>
<proteinExistence type="inferred from homology"/>